<dbReference type="EMBL" id="AC025287">
    <property type="status" value="NOT_ANNOTATED_CDS"/>
    <property type="molecule type" value="Genomic_DNA"/>
</dbReference>
<dbReference type="CCDS" id="CCDS92197.1"/>
<dbReference type="RefSeq" id="NP_001382791.1">
    <property type="nucleotide sequence ID" value="NM_001395862.1"/>
</dbReference>
<dbReference type="SMR" id="A0A1W2PPK0"/>
<dbReference type="FunCoup" id="A0A1W2PPK0">
    <property type="interactions" value="17"/>
</dbReference>
<dbReference type="STRING" id="9606.ENSP00000491197"/>
<dbReference type="BioMuta" id="ENSG00000284484"/>
<dbReference type="Ensembl" id="ENST00000640173.1">
    <property type="protein sequence ID" value="ENSP00000491197.1"/>
    <property type="gene ID" value="ENSG00000284484.1"/>
</dbReference>
<dbReference type="GeneID" id="112268164"/>
<dbReference type="MANE-Select" id="ENST00000640173.1">
    <property type="protein sequence ID" value="ENSP00000491197.1"/>
    <property type="RefSeq nucleotide sequence ID" value="NM_001395862.1"/>
    <property type="RefSeq protein sequence ID" value="NP_001382791.1"/>
</dbReference>
<dbReference type="AGR" id="HGNC:55919"/>
<dbReference type="GeneCards" id="CPHXL2"/>
<dbReference type="HGNC" id="HGNC:55919">
    <property type="gene designation" value="CPHXL2"/>
</dbReference>
<dbReference type="HPA" id="ENSG00000284484">
    <property type="expression patterns" value="Not detected"/>
</dbReference>
<dbReference type="VEuPathDB" id="HostDB:ENSG00000284484"/>
<dbReference type="GeneTree" id="ENSGT00520000058758"/>
<dbReference type="InParanoid" id="A0A1W2PPK0"/>
<dbReference type="OMA" id="QQVGSMC"/>
<dbReference type="OrthoDB" id="6159439at2759"/>
<dbReference type="PAN-GO" id="A0A1W2PPK0">
    <property type="GO annotations" value="4 GO annotations based on evolutionary models"/>
</dbReference>
<dbReference type="PRO" id="PR:A0A1W2PPK0"/>
<dbReference type="Proteomes" id="UP000005640">
    <property type="component" value="Chromosome 16"/>
</dbReference>
<dbReference type="RNAct" id="A0A1W2PPK0">
    <property type="molecule type" value="protein"/>
</dbReference>
<dbReference type="Bgee" id="ENSG00000284484">
    <property type="expression patterns" value="Expressed in male germ line stem cell (sensu Vertebrata) in testis and 15 other cell types or tissues"/>
</dbReference>
<dbReference type="GO" id="GO:0005634">
    <property type="term" value="C:nucleus"/>
    <property type="evidence" value="ECO:0000318"/>
    <property type="project" value="GO_Central"/>
</dbReference>
<dbReference type="GO" id="GO:0000981">
    <property type="term" value="F:DNA-binding transcription factor activity, RNA polymerase II-specific"/>
    <property type="evidence" value="ECO:0000318"/>
    <property type="project" value="GO_Central"/>
</dbReference>
<dbReference type="GO" id="GO:0000978">
    <property type="term" value="F:RNA polymerase II cis-regulatory region sequence-specific DNA binding"/>
    <property type="evidence" value="ECO:0000318"/>
    <property type="project" value="GO_Central"/>
</dbReference>
<dbReference type="GO" id="GO:0006357">
    <property type="term" value="P:regulation of transcription by RNA polymerase II"/>
    <property type="evidence" value="ECO:0000318"/>
    <property type="project" value="GO_Central"/>
</dbReference>
<dbReference type="CDD" id="cd00086">
    <property type="entry name" value="homeodomain"/>
    <property type="match status" value="1"/>
</dbReference>
<dbReference type="Gene3D" id="1.10.10.60">
    <property type="entry name" value="Homeodomain-like"/>
    <property type="match status" value="1"/>
</dbReference>
<dbReference type="InterPro" id="IPR050720">
    <property type="entry name" value="Engrailed_Homeobox_TFs"/>
</dbReference>
<dbReference type="InterPro" id="IPR001356">
    <property type="entry name" value="HD"/>
</dbReference>
<dbReference type="InterPro" id="IPR009057">
    <property type="entry name" value="Homeodomain-like_sf"/>
</dbReference>
<dbReference type="PANTHER" id="PTHR24341:SF8">
    <property type="entry name" value="CYTOPLASMIC POLYADENYLATED HOMEOBOX-LIKE PROTEIN 2"/>
    <property type="match status" value="1"/>
</dbReference>
<dbReference type="PANTHER" id="PTHR24341">
    <property type="entry name" value="HOMEOBOX PROTEIN ENGRAILED"/>
    <property type="match status" value="1"/>
</dbReference>
<dbReference type="Pfam" id="PF00046">
    <property type="entry name" value="Homeodomain"/>
    <property type="match status" value="1"/>
</dbReference>
<dbReference type="SMART" id="SM00389">
    <property type="entry name" value="HOX"/>
    <property type="match status" value="1"/>
</dbReference>
<dbReference type="SUPFAM" id="SSF46689">
    <property type="entry name" value="Homeodomain-like"/>
    <property type="match status" value="1"/>
</dbReference>
<dbReference type="PROSITE" id="PS50071">
    <property type="entry name" value="HOMEOBOX_2"/>
    <property type="match status" value="1"/>
</dbReference>
<proteinExistence type="inferred from homology"/>
<sequence length="400" mass="45221">MSSQAFPAEEDHHNEERQTKKKRKTKHRHKFSEELLQELKEIFGENGYPDFTTRKTLANKFDCPVNVINNWFQNNRARLPPEERQRIFLTWKKHDFPVQACPFLSLQETQAAASNYATEQSFSCAKRALMRRPGCSLLEKQRIACQQMGYNCFSLENQETPSQQVGSMCSSLEKQGIPSQQVGSQCSYLVAGTEKHPGYALEYGGDTGSEHSTAYRFLSYNSAECLHPPPSSVPYFHGERTETRESQHASPFLLDYAQGAYGVKKDHCLCSFCLSLLQEQQQNDWQYHPQQHQQPQNYSEGMMLQEQLPMDSGPWDLEKQWPSAQSQLQSQLPQNNGKPLCSQLQHVPPQIAANSPLLPLGQDMQVGASSNSGLKCSSFRLRGLHGPATGTQGCSFAKYC</sequence>
<evidence type="ECO:0000255" key="1">
    <source>
        <dbReference type="PROSITE-ProRule" id="PRU00108"/>
    </source>
</evidence>
<evidence type="ECO:0000256" key="2">
    <source>
        <dbReference type="SAM" id="MobiDB-lite"/>
    </source>
</evidence>
<evidence type="ECO:0000305" key="3"/>
<evidence type="ECO:0000312" key="4">
    <source>
        <dbReference type="HGNC" id="HGNC:55919"/>
    </source>
</evidence>
<organism>
    <name type="scientific">Homo sapiens</name>
    <name type="common">Human</name>
    <dbReference type="NCBI Taxonomy" id="9606"/>
    <lineage>
        <taxon>Eukaryota</taxon>
        <taxon>Metazoa</taxon>
        <taxon>Chordata</taxon>
        <taxon>Craniata</taxon>
        <taxon>Vertebrata</taxon>
        <taxon>Euteleostomi</taxon>
        <taxon>Mammalia</taxon>
        <taxon>Eutheria</taxon>
        <taxon>Euarchontoglires</taxon>
        <taxon>Primates</taxon>
        <taxon>Haplorrhini</taxon>
        <taxon>Catarrhini</taxon>
        <taxon>Hominidae</taxon>
        <taxon>Homo</taxon>
    </lineage>
</organism>
<name>CPHL2_HUMAN</name>
<gene>
    <name evidence="4" type="primary">CPHXL2</name>
</gene>
<comment type="subcellular location">
    <subcellularLocation>
        <location evidence="1">Nucleus</location>
    </subcellularLocation>
</comment>
<protein>
    <recommendedName>
        <fullName evidence="3">Cytoplasmic polyadenylated homeobox-like protein 2</fullName>
    </recommendedName>
</protein>
<keyword id="KW-0238">DNA-binding</keyword>
<keyword id="KW-0371">Homeobox</keyword>
<keyword id="KW-0539">Nucleus</keyword>
<keyword id="KW-1185">Reference proteome</keyword>
<accession>A0A1W2PPK0</accession>
<feature type="chain" id="PRO_0000454732" description="Cytoplasmic polyadenylated homeobox-like protein 2">
    <location>
        <begin position="1"/>
        <end position="400"/>
    </location>
</feature>
<feature type="DNA-binding region" description="Homeobox" evidence="1">
    <location>
        <begin position="24"/>
        <end position="83"/>
    </location>
</feature>
<feature type="region of interest" description="Disordered" evidence="2">
    <location>
        <begin position="1"/>
        <end position="29"/>
    </location>
</feature>
<feature type="compositionally biased region" description="Basic and acidic residues" evidence="2">
    <location>
        <begin position="9"/>
        <end position="18"/>
    </location>
</feature>
<feature type="compositionally biased region" description="Basic residues" evidence="2">
    <location>
        <begin position="19"/>
        <end position="29"/>
    </location>
</feature>
<reference key="1">
    <citation type="journal article" date="2004" name="Nature">
        <title>The sequence and analysis of duplication-rich human chromosome 16.</title>
        <authorList>
            <person name="Martin J."/>
            <person name="Han C."/>
            <person name="Gordon L.A."/>
            <person name="Terry A."/>
            <person name="Prabhakar S."/>
            <person name="She X."/>
            <person name="Xie G."/>
            <person name="Hellsten U."/>
            <person name="Chan Y.M."/>
            <person name="Altherr M."/>
            <person name="Couronne O."/>
            <person name="Aerts A."/>
            <person name="Bajorek E."/>
            <person name="Black S."/>
            <person name="Blumer H."/>
            <person name="Branscomb E."/>
            <person name="Brown N.C."/>
            <person name="Bruno W.J."/>
            <person name="Buckingham J.M."/>
            <person name="Callen D.F."/>
            <person name="Campbell C.S."/>
            <person name="Campbell M.L."/>
            <person name="Campbell E.W."/>
            <person name="Caoile C."/>
            <person name="Challacombe J.F."/>
            <person name="Chasteen L.A."/>
            <person name="Chertkov O."/>
            <person name="Chi H.C."/>
            <person name="Christensen M."/>
            <person name="Clark L.M."/>
            <person name="Cohn J.D."/>
            <person name="Denys M."/>
            <person name="Detter J.C."/>
            <person name="Dickson M."/>
            <person name="Dimitrijevic-Bussod M."/>
            <person name="Escobar J."/>
            <person name="Fawcett J.J."/>
            <person name="Flowers D."/>
            <person name="Fotopulos D."/>
            <person name="Glavina T."/>
            <person name="Gomez M."/>
            <person name="Gonzales E."/>
            <person name="Goodstein D."/>
            <person name="Goodwin L.A."/>
            <person name="Grady D.L."/>
            <person name="Grigoriev I."/>
            <person name="Groza M."/>
            <person name="Hammon N."/>
            <person name="Hawkins T."/>
            <person name="Haydu L."/>
            <person name="Hildebrand C.E."/>
            <person name="Huang W."/>
            <person name="Israni S."/>
            <person name="Jett J."/>
            <person name="Jewett P.B."/>
            <person name="Kadner K."/>
            <person name="Kimball H."/>
            <person name="Kobayashi A."/>
            <person name="Krawczyk M.-C."/>
            <person name="Leyba T."/>
            <person name="Longmire J.L."/>
            <person name="Lopez F."/>
            <person name="Lou Y."/>
            <person name="Lowry S."/>
            <person name="Ludeman T."/>
            <person name="Manohar C.F."/>
            <person name="Mark G.A."/>
            <person name="McMurray K.L."/>
            <person name="Meincke L.J."/>
            <person name="Morgan J."/>
            <person name="Moyzis R.K."/>
            <person name="Mundt M.O."/>
            <person name="Munk A.C."/>
            <person name="Nandkeshwar R.D."/>
            <person name="Pitluck S."/>
            <person name="Pollard M."/>
            <person name="Predki P."/>
            <person name="Parson-Quintana B."/>
            <person name="Ramirez L."/>
            <person name="Rash S."/>
            <person name="Retterer J."/>
            <person name="Ricke D.O."/>
            <person name="Robinson D.L."/>
            <person name="Rodriguez A."/>
            <person name="Salamov A."/>
            <person name="Saunders E.H."/>
            <person name="Scott D."/>
            <person name="Shough T."/>
            <person name="Stallings R.L."/>
            <person name="Stalvey M."/>
            <person name="Sutherland R.D."/>
            <person name="Tapia R."/>
            <person name="Tesmer J.G."/>
            <person name="Thayer N."/>
            <person name="Thompson L.S."/>
            <person name="Tice H."/>
            <person name="Torney D.C."/>
            <person name="Tran-Gyamfi M."/>
            <person name="Tsai M."/>
            <person name="Ulanovsky L.E."/>
            <person name="Ustaszewska A."/>
            <person name="Vo N."/>
            <person name="White P.S."/>
            <person name="Williams A.L."/>
            <person name="Wills P.L."/>
            <person name="Wu J.-R."/>
            <person name="Wu K."/>
            <person name="Yang J."/>
            <person name="DeJong P."/>
            <person name="Bruce D."/>
            <person name="Doggett N.A."/>
            <person name="Deaven L."/>
            <person name="Schmutz J."/>
            <person name="Grimwood J."/>
            <person name="Richardson P."/>
            <person name="Rokhsar D.S."/>
            <person name="Eichler E.E."/>
            <person name="Gilna P."/>
            <person name="Lucas S.M."/>
            <person name="Myers R.M."/>
            <person name="Rubin E.M."/>
            <person name="Pennacchio L.A."/>
        </authorList>
    </citation>
    <scope>NUCLEOTIDE SEQUENCE [LARGE SCALE GENOMIC DNA]</scope>
</reference>